<reference key="1">
    <citation type="journal article" date="2005" name="Jpn. Agric. Res. Q.">
        <title>Genome sequence of Xanthomonas oryzae pv. oryzae suggests contribution of large numbers of effector genes and insertion sequences to its race diversity.</title>
        <authorList>
            <person name="Ochiai H."/>
            <person name="Inoue Y."/>
            <person name="Takeya M."/>
            <person name="Sasaki A."/>
            <person name="Kaku H."/>
        </authorList>
    </citation>
    <scope>NUCLEOTIDE SEQUENCE [LARGE SCALE GENOMIC DNA]</scope>
    <source>
        <strain>MAFF 311018</strain>
    </source>
</reference>
<organism>
    <name type="scientific">Xanthomonas oryzae pv. oryzae (strain MAFF 311018)</name>
    <dbReference type="NCBI Taxonomy" id="342109"/>
    <lineage>
        <taxon>Bacteria</taxon>
        <taxon>Pseudomonadati</taxon>
        <taxon>Pseudomonadota</taxon>
        <taxon>Gammaproteobacteria</taxon>
        <taxon>Lysobacterales</taxon>
        <taxon>Lysobacteraceae</taxon>
        <taxon>Xanthomonas</taxon>
    </lineage>
</organism>
<sequence length="705" mass="77608">MARTTPIERYRNFGIMAHIDAGKTTTSERILFYTGVSHKIGEVHDGAAVMDWMEQEQERGITITSAATTAFWSGMDKSMPQHRFNIIDTPGHVDFTIEVERSLRVLDGAVFVLCAVGGVQPQSETVWRQANKYSVPRMAFVNKMDRTGANFDKVVEQLKARLGAYAVPMQVPIGAEDGFEGVVDLLKMKAIHWDTASQGTTFEYSDIPAELVDVATDARSFMVEAAAEASEDLMDKYLNEGDLSEEEILKGLRERTLKVEIVPVFCGSAFKNKGVQAMLDGVVHLLPSPADRPPVQGIDEDEKEDTRAATDTAPFSALAFKIMTDPFVGSLTFFRVYSGTLNSGDQVYNPVKSKKERVGRILQMHSNNREEIKEVRAGDIAAAVGLKDVTTGDTLCAQDKIITLERMVFPEPVISMAVEPKTKSDQEKMGMALGRLAQEDPSFRVKTDEESGQTIISGMGELHLDIIVDRMRREFNVEANVGKPQVAYRETIRKSDVKSDYKHAKQSGGKGQYGHVVIELSPMTEEDRKSDNVKDDFLFINDITGGIIPKEFIPSVEKGLRETITSGPIAGFPVVGVKVKLVFGSYHDVDSSEMAFKLAASMAFKQGFAKASPVLLEPIMKVEIVSPEDYLGDVMGDVSRRRGVLQGQDDSPSGKIINAMIPLGEMFGYATSLRSMSQGRATFSMEFDHYEEAPANIADAVTKKG</sequence>
<evidence type="ECO:0000255" key="1">
    <source>
        <dbReference type="HAMAP-Rule" id="MF_00054"/>
    </source>
</evidence>
<evidence type="ECO:0000256" key="2">
    <source>
        <dbReference type="SAM" id="MobiDB-lite"/>
    </source>
</evidence>
<protein>
    <recommendedName>
        <fullName evidence="1">Elongation factor G</fullName>
        <shortName evidence="1">EF-G</shortName>
    </recommendedName>
</protein>
<comment type="function">
    <text evidence="1">Catalyzes the GTP-dependent ribosomal translocation step during translation elongation. During this step, the ribosome changes from the pre-translocational (PRE) to the post-translocational (POST) state as the newly formed A-site-bound peptidyl-tRNA and P-site-bound deacylated tRNA move to the P and E sites, respectively. Catalyzes the coordinated movement of the two tRNA molecules, the mRNA and conformational changes in the ribosome.</text>
</comment>
<comment type="subcellular location">
    <subcellularLocation>
        <location evidence="1">Cytoplasm</location>
    </subcellularLocation>
</comment>
<comment type="similarity">
    <text evidence="1">Belongs to the TRAFAC class translation factor GTPase superfamily. Classic translation factor GTPase family. EF-G/EF-2 subfamily.</text>
</comment>
<name>EFG_XANOM</name>
<dbReference type="EMBL" id="AP008229">
    <property type="protein sequence ID" value="BAE70145.1"/>
    <property type="molecule type" value="Genomic_DNA"/>
</dbReference>
<dbReference type="RefSeq" id="WP_011260031.1">
    <property type="nucleotide sequence ID" value="NC_007705.1"/>
</dbReference>
<dbReference type="SMR" id="Q2NZY2"/>
<dbReference type="KEGG" id="xom:XOO3390"/>
<dbReference type="HOGENOM" id="CLU_002794_4_1_6"/>
<dbReference type="GO" id="GO:0005737">
    <property type="term" value="C:cytoplasm"/>
    <property type="evidence" value="ECO:0007669"/>
    <property type="project" value="UniProtKB-SubCell"/>
</dbReference>
<dbReference type="GO" id="GO:0005525">
    <property type="term" value="F:GTP binding"/>
    <property type="evidence" value="ECO:0007669"/>
    <property type="project" value="UniProtKB-UniRule"/>
</dbReference>
<dbReference type="GO" id="GO:0003924">
    <property type="term" value="F:GTPase activity"/>
    <property type="evidence" value="ECO:0007669"/>
    <property type="project" value="InterPro"/>
</dbReference>
<dbReference type="GO" id="GO:0097216">
    <property type="term" value="F:guanosine tetraphosphate binding"/>
    <property type="evidence" value="ECO:0007669"/>
    <property type="project" value="UniProtKB-ARBA"/>
</dbReference>
<dbReference type="GO" id="GO:0003746">
    <property type="term" value="F:translation elongation factor activity"/>
    <property type="evidence" value="ECO:0007669"/>
    <property type="project" value="UniProtKB-UniRule"/>
</dbReference>
<dbReference type="GO" id="GO:0032790">
    <property type="term" value="P:ribosome disassembly"/>
    <property type="evidence" value="ECO:0007669"/>
    <property type="project" value="TreeGrafter"/>
</dbReference>
<dbReference type="CDD" id="cd01886">
    <property type="entry name" value="EF-G"/>
    <property type="match status" value="1"/>
</dbReference>
<dbReference type="CDD" id="cd16262">
    <property type="entry name" value="EFG_III"/>
    <property type="match status" value="1"/>
</dbReference>
<dbReference type="CDD" id="cd01434">
    <property type="entry name" value="EFG_mtEFG1_IV"/>
    <property type="match status" value="1"/>
</dbReference>
<dbReference type="CDD" id="cd03713">
    <property type="entry name" value="EFG_mtEFG_C"/>
    <property type="match status" value="1"/>
</dbReference>
<dbReference type="CDD" id="cd04088">
    <property type="entry name" value="EFG_mtEFG_II"/>
    <property type="match status" value="1"/>
</dbReference>
<dbReference type="FunFam" id="2.40.30.10:FF:000006">
    <property type="entry name" value="Elongation factor G"/>
    <property type="match status" value="1"/>
</dbReference>
<dbReference type="FunFam" id="3.30.230.10:FF:000003">
    <property type="entry name" value="Elongation factor G"/>
    <property type="match status" value="1"/>
</dbReference>
<dbReference type="FunFam" id="3.30.70.240:FF:000001">
    <property type="entry name" value="Elongation factor G"/>
    <property type="match status" value="1"/>
</dbReference>
<dbReference type="FunFam" id="3.30.70.870:FF:000001">
    <property type="entry name" value="Elongation factor G"/>
    <property type="match status" value="1"/>
</dbReference>
<dbReference type="FunFam" id="3.40.50.300:FF:000029">
    <property type="entry name" value="Elongation factor G"/>
    <property type="match status" value="1"/>
</dbReference>
<dbReference type="Gene3D" id="3.30.230.10">
    <property type="match status" value="1"/>
</dbReference>
<dbReference type="Gene3D" id="3.30.70.240">
    <property type="match status" value="1"/>
</dbReference>
<dbReference type="Gene3D" id="3.30.70.870">
    <property type="entry name" value="Elongation Factor G (Translational Gtpase), domain 3"/>
    <property type="match status" value="1"/>
</dbReference>
<dbReference type="Gene3D" id="3.40.50.300">
    <property type="entry name" value="P-loop containing nucleotide triphosphate hydrolases"/>
    <property type="match status" value="1"/>
</dbReference>
<dbReference type="Gene3D" id="2.40.30.10">
    <property type="entry name" value="Translation factors"/>
    <property type="match status" value="1"/>
</dbReference>
<dbReference type="HAMAP" id="MF_00054_B">
    <property type="entry name" value="EF_G_EF_2_B"/>
    <property type="match status" value="1"/>
</dbReference>
<dbReference type="InterPro" id="IPR041095">
    <property type="entry name" value="EFG_II"/>
</dbReference>
<dbReference type="InterPro" id="IPR009022">
    <property type="entry name" value="EFG_III"/>
</dbReference>
<dbReference type="InterPro" id="IPR035647">
    <property type="entry name" value="EFG_III/V"/>
</dbReference>
<dbReference type="InterPro" id="IPR047872">
    <property type="entry name" value="EFG_IV"/>
</dbReference>
<dbReference type="InterPro" id="IPR035649">
    <property type="entry name" value="EFG_V"/>
</dbReference>
<dbReference type="InterPro" id="IPR000640">
    <property type="entry name" value="EFG_V-like"/>
</dbReference>
<dbReference type="InterPro" id="IPR004161">
    <property type="entry name" value="EFTu-like_2"/>
</dbReference>
<dbReference type="InterPro" id="IPR031157">
    <property type="entry name" value="G_TR_CS"/>
</dbReference>
<dbReference type="InterPro" id="IPR027417">
    <property type="entry name" value="P-loop_NTPase"/>
</dbReference>
<dbReference type="InterPro" id="IPR020568">
    <property type="entry name" value="Ribosomal_Su5_D2-typ_SF"/>
</dbReference>
<dbReference type="InterPro" id="IPR014721">
    <property type="entry name" value="Ribsml_uS5_D2-typ_fold_subgr"/>
</dbReference>
<dbReference type="InterPro" id="IPR005225">
    <property type="entry name" value="Small_GTP-bd"/>
</dbReference>
<dbReference type="InterPro" id="IPR000795">
    <property type="entry name" value="T_Tr_GTP-bd_dom"/>
</dbReference>
<dbReference type="InterPro" id="IPR009000">
    <property type="entry name" value="Transl_B-barrel_sf"/>
</dbReference>
<dbReference type="InterPro" id="IPR004540">
    <property type="entry name" value="Transl_elong_EFG/EF2"/>
</dbReference>
<dbReference type="InterPro" id="IPR005517">
    <property type="entry name" value="Transl_elong_EFG/EF2_IV"/>
</dbReference>
<dbReference type="NCBIfam" id="TIGR00484">
    <property type="entry name" value="EF-G"/>
    <property type="match status" value="1"/>
</dbReference>
<dbReference type="NCBIfam" id="NF009381">
    <property type="entry name" value="PRK12740.1-5"/>
    <property type="match status" value="1"/>
</dbReference>
<dbReference type="NCBIfam" id="TIGR00231">
    <property type="entry name" value="small_GTP"/>
    <property type="match status" value="1"/>
</dbReference>
<dbReference type="PANTHER" id="PTHR43261:SF1">
    <property type="entry name" value="RIBOSOME-RELEASING FACTOR 2, MITOCHONDRIAL"/>
    <property type="match status" value="1"/>
</dbReference>
<dbReference type="PANTHER" id="PTHR43261">
    <property type="entry name" value="TRANSLATION ELONGATION FACTOR G-RELATED"/>
    <property type="match status" value="1"/>
</dbReference>
<dbReference type="Pfam" id="PF00679">
    <property type="entry name" value="EFG_C"/>
    <property type="match status" value="1"/>
</dbReference>
<dbReference type="Pfam" id="PF14492">
    <property type="entry name" value="EFG_III"/>
    <property type="match status" value="1"/>
</dbReference>
<dbReference type="Pfam" id="PF03764">
    <property type="entry name" value="EFG_IV"/>
    <property type="match status" value="1"/>
</dbReference>
<dbReference type="Pfam" id="PF00009">
    <property type="entry name" value="GTP_EFTU"/>
    <property type="match status" value="1"/>
</dbReference>
<dbReference type="Pfam" id="PF03144">
    <property type="entry name" value="GTP_EFTU_D2"/>
    <property type="match status" value="1"/>
</dbReference>
<dbReference type="PRINTS" id="PR00315">
    <property type="entry name" value="ELONGATNFCT"/>
</dbReference>
<dbReference type="SMART" id="SM00838">
    <property type="entry name" value="EFG_C"/>
    <property type="match status" value="1"/>
</dbReference>
<dbReference type="SMART" id="SM00889">
    <property type="entry name" value="EFG_IV"/>
    <property type="match status" value="1"/>
</dbReference>
<dbReference type="SUPFAM" id="SSF54980">
    <property type="entry name" value="EF-G C-terminal domain-like"/>
    <property type="match status" value="2"/>
</dbReference>
<dbReference type="SUPFAM" id="SSF52540">
    <property type="entry name" value="P-loop containing nucleoside triphosphate hydrolases"/>
    <property type="match status" value="1"/>
</dbReference>
<dbReference type="SUPFAM" id="SSF54211">
    <property type="entry name" value="Ribosomal protein S5 domain 2-like"/>
    <property type="match status" value="1"/>
</dbReference>
<dbReference type="SUPFAM" id="SSF50447">
    <property type="entry name" value="Translation proteins"/>
    <property type="match status" value="1"/>
</dbReference>
<dbReference type="PROSITE" id="PS00301">
    <property type="entry name" value="G_TR_1"/>
    <property type="match status" value="1"/>
</dbReference>
<dbReference type="PROSITE" id="PS51722">
    <property type="entry name" value="G_TR_2"/>
    <property type="match status" value="1"/>
</dbReference>
<keyword id="KW-0963">Cytoplasm</keyword>
<keyword id="KW-0251">Elongation factor</keyword>
<keyword id="KW-0342">GTP-binding</keyword>
<keyword id="KW-0547">Nucleotide-binding</keyword>
<keyword id="KW-0648">Protein biosynthesis</keyword>
<feature type="chain" id="PRO_0000263534" description="Elongation factor G">
    <location>
        <begin position="1"/>
        <end position="705"/>
    </location>
</feature>
<feature type="domain" description="tr-type G">
    <location>
        <begin position="8"/>
        <end position="290"/>
    </location>
</feature>
<feature type="region of interest" description="Disordered" evidence="2">
    <location>
        <begin position="290"/>
        <end position="309"/>
    </location>
</feature>
<feature type="binding site" evidence="1">
    <location>
        <begin position="17"/>
        <end position="24"/>
    </location>
    <ligand>
        <name>GTP</name>
        <dbReference type="ChEBI" id="CHEBI:37565"/>
    </ligand>
</feature>
<feature type="binding site" evidence="1">
    <location>
        <begin position="88"/>
        <end position="92"/>
    </location>
    <ligand>
        <name>GTP</name>
        <dbReference type="ChEBI" id="CHEBI:37565"/>
    </ligand>
</feature>
<feature type="binding site" evidence="1">
    <location>
        <begin position="142"/>
        <end position="145"/>
    </location>
    <ligand>
        <name>GTP</name>
        <dbReference type="ChEBI" id="CHEBI:37565"/>
    </ligand>
</feature>
<proteinExistence type="inferred from homology"/>
<gene>
    <name evidence="1" type="primary">fusA</name>
    <name type="ordered locus">XOO3390</name>
</gene>
<accession>Q2NZY2</accession>